<reference key="1">
    <citation type="submission" date="2000-09" db="EMBL/GenBank/DDBJ databases">
        <title>Complete sequence for the B1 strain of Newcastle disease virus.</title>
        <authorList>
            <person name="Sellers H.S."/>
            <person name="Seal B.S."/>
        </authorList>
    </citation>
    <scope>NUCLEOTIDE SEQUENCE [GENOMIC RNA]</scope>
</reference>
<keyword id="KW-0175">Coiled coil</keyword>
<keyword id="KW-1015">Disulfide bond</keyword>
<keyword id="KW-1169">Fusion of virus membrane with host cell membrane</keyword>
<keyword id="KW-1168">Fusion of virus membrane with host membrane</keyword>
<keyword id="KW-0325">Glycoprotein</keyword>
<keyword id="KW-1032">Host cell membrane</keyword>
<keyword id="KW-1043">Host membrane</keyword>
<keyword id="KW-0449">Lipoprotein</keyword>
<keyword id="KW-0472">Membrane</keyword>
<keyword id="KW-0564">Palmitate</keyword>
<keyword id="KW-1185">Reference proteome</keyword>
<keyword id="KW-0732">Signal</keyword>
<keyword id="KW-0812">Transmembrane</keyword>
<keyword id="KW-1133">Transmembrane helix</keyword>
<keyword id="KW-0261">Viral envelope protein</keyword>
<keyword id="KW-1162">Viral penetration into host cytoplasm</keyword>
<keyword id="KW-0946">Virion</keyword>
<keyword id="KW-1160">Virus entry into host cell</keyword>
<name>FUS_NDVB1</name>
<sequence>MGSRPFTKNPAPMMLTIRVALVLSCICPANSIDGRPFAAAGIVVTGDKAVNIYTSSQTGSIIVKLLPNLPKDKEACAKAPLDAYNRTLTTLLTPLGDSIRRIQESVTTSGGGRQGRLIGAIIGGVALGVATAAQITAAAALIQAKQNAANILRLKESIAATNEAVHEVTDGLSQLAVAVGKMQQFVNDQFNKTAQELDCIKIAQQVGVELNLYLTELTTVFGPQITSPALNKLTIQALYNLAGGNMDYLLTKLGIGNNQLSSLIGSGLITGNPILYDSQTQLLGIQVTLPSVGNLNNMRATYLETLSVSTTRGFASALVPKVVTQVGSVIEELDTSYCIETDLDLYCTRIVTFPMSPGIYSCLSGNTSACMYSKTEGALTTPYMTIKGSVIANCKMTTCRCVNPPGIISQNYGEAVSLIDKQSCNVLSLGGITLRLSGEFDVTYQKNISIQDSQVIITGNLDISTELGNVNNSISNALNKLEESNRKLDKVNVKLTSTSALITYIVLTIISLVFGILSLILACYLMYKQKAQQKTLLWLGNNTLDQMRATTKM</sequence>
<dbReference type="EMBL" id="AF309418">
    <property type="protein sequence ID" value="AAG36978.1"/>
    <property type="molecule type" value="Genomic_RNA"/>
</dbReference>
<dbReference type="RefSeq" id="NP_071469.1">
    <property type="nucleotide sequence ID" value="NC_002617.1"/>
</dbReference>
<dbReference type="SMR" id="Q9DLD4"/>
<dbReference type="GlyCosmos" id="Q9DLD4">
    <property type="glycosylation" value="5 sites, No reported glycans"/>
</dbReference>
<dbReference type="Proteomes" id="UP000002328">
    <property type="component" value="Segment"/>
</dbReference>
<dbReference type="GO" id="GO:0020002">
    <property type="term" value="C:host cell plasma membrane"/>
    <property type="evidence" value="ECO:0007669"/>
    <property type="project" value="UniProtKB-SubCell"/>
</dbReference>
<dbReference type="GO" id="GO:0016020">
    <property type="term" value="C:membrane"/>
    <property type="evidence" value="ECO:0007669"/>
    <property type="project" value="UniProtKB-KW"/>
</dbReference>
<dbReference type="GO" id="GO:0019031">
    <property type="term" value="C:viral envelope"/>
    <property type="evidence" value="ECO:0007669"/>
    <property type="project" value="UniProtKB-KW"/>
</dbReference>
<dbReference type="GO" id="GO:0055036">
    <property type="term" value="C:virion membrane"/>
    <property type="evidence" value="ECO:0007669"/>
    <property type="project" value="UniProtKB-SubCell"/>
</dbReference>
<dbReference type="GO" id="GO:0019064">
    <property type="term" value="P:fusion of virus membrane with host plasma membrane"/>
    <property type="evidence" value="ECO:0007669"/>
    <property type="project" value="UniProtKB-KW"/>
</dbReference>
<dbReference type="GO" id="GO:0046718">
    <property type="term" value="P:symbiont entry into host cell"/>
    <property type="evidence" value="ECO:0007669"/>
    <property type="project" value="UniProtKB-KW"/>
</dbReference>
<dbReference type="Gene3D" id="1.10.287.2480">
    <property type="match status" value="1"/>
</dbReference>
<dbReference type="Gene3D" id="6.10.10.110">
    <property type="match status" value="1"/>
</dbReference>
<dbReference type="Gene3D" id="2.60.40.1690">
    <property type="entry name" value="Head and neck region of the ectodomain of NDV fusion glycoprotein"/>
    <property type="match status" value="1"/>
</dbReference>
<dbReference type="Gene3D" id="2.40.490.10">
    <property type="entry name" value="Newcastle disease virus like domain"/>
    <property type="match status" value="1"/>
</dbReference>
<dbReference type="InterPro" id="IPR000776">
    <property type="entry name" value="Fusion_F0_Paramyxovir"/>
</dbReference>
<dbReference type="Pfam" id="PF00523">
    <property type="entry name" value="Fusion_gly"/>
    <property type="match status" value="1"/>
</dbReference>
<dbReference type="SUPFAM" id="SSF69922">
    <property type="entry name" value="Head and neck region of the ectodomain of NDV fusion glycoprotein"/>
    <property type="match status" value="1"/>
</dbReference>
<dbReference type="SUPFAM" id="SSF58069">
    <property type="entry name" value="Virus ectodomain"/>
    <property type="match status" value="1"/>
</dbReference>
<comment type="function">
    <text evidence="1">Class I viral fusion protein. Under the current model, the protein has at least 3 conformational states: pre-fusion native state, pre-hairpin intermediate state, and post-fusion hairpin state. During viral and plasma cell membrane fusion, the heptad repeat (HR) regions assume a trimer-of-hairpins structure, positioning the fusion peptide in close proximity to the C-terminal region of the ectodomain. The formation of this structure appears to drive apposition and subsequent fusion of viral and plasma cell membranes. Directs fusion of viral and cellular membranes leading to delivery of the nucleocapsid into the cytoplasm. This fusion is pH independent and occurs directly at the outer cell membrane. The trimer of F1-F2 (F protein) probably interacts with HN at the virion surface. Upon HN binding to its cellular receptor, the hydrophobic fusion peptide is unmasked and interacts with the cellular membrane, inducing the fusion between cell and virion membranes. Later in infection, F proteins expressed at the plasma membrane of infected cells could mediate fusion with adjacent cells to form syncytia, a cytopathic effect that could lead to tissue necrosis (By similarity).</text>
</comment>
<comment type="subunit">
    <text evidence="1">Homotrimer of disulfide-linked F1-F2.</text>
</comment>
<comment type="subcellular location">
    <subcellularLocation>
        <location evidence="1">Virion membrane</location>
        <topology evidence="1">Single-pass type I membrane protein</topology>
    </subcellularLocation>
    <subcellularLocation>
        <location evidence="1">Host cell membrane</location>
        <topology evidence="1">Single-pass membrane protein</topology>
    </subcellularLocation>
</comment>
<comment type="PTM">
    <text evidence="1">The inactive precursor F0 is glycosylated and proteolytically cleaved into F1 and F2 to be functionally active. The cleavage is mediated by cellular proteases during the transport and maturation of the polypeptide (By similarity).</text>
</comment>
<comment type="similarity">
    <text evidence="3">Belongs to the paramyxoviruses fusion glycoprotein family.</text>
</comment>
<accession>Q9DLD4</accession>
<evidence type="ECO:0000250" key="1"/>
<evidence type="ECO:0000255" key="2"/>
<evidence type="ECO:0000305" key="3"/>
<protein>
    <recommendedName>
        <fullName>Fusion glycoprotein F0</fullName>
    </recommendedName>
    <component>
        <recommendedName>
            <fullName>Fusion glycoprotein F2</fullName>
        </recommendedName>
    </component>
    <component>
        <recommendedName>
            <fullName>Fusion glycoprotein F1</fullName>
        </recommendedName>
    </component>
</protein>
<organismHost>
    <name type="scientific">Gallus gallus</name>
    <name type="common">Chicken</name>
    <dbReference type="NCBI Taxonomy" id="9031"/>
</organismHost>
<feature type="signal peptide" evidence="2">
    <location>
        <begin position="1"/>
        <end position="31"/>
    </location>
</feature>
<feature type="chain" id="PRO_0000390623" description="Fusion glycoprotein F0">
    <location>
        <begin position="32"/>
        <end position="553"/>
    </location>
</feature>
<feature type="chain" id="PRO_0000390624" description="Fusion glycoprotein F2">
    <location>
        <begin position="32"/>
        <end position="116"/>
    </location>
</feature>
<feature type="chain" id="PRO_0000390625" description="Fusion glycoprotein F1">
    <location>
        <begin position="117"/>
        <end position="553"/>
    </location>
</feature>
<feature type="topological domain" description="Extracellular" evidence="1">
    <location>
        <begin position="31"/>
        <end position="500"/>
    </location>
</feature>
<feature type="transmembrane region" description="Helical" evidence="2">
    <location>
        <begin position="501"/>
        <end position="521"/>
    </location>
</feature>
<feature type="topological domain" description="Cytoplasmic" evidence="1">
    <location>
        <begin position="522"/>
        <end position="553"/>
    </location>
</feature>
<feature type="coiled-coil region" evidence="2">
    <location>
        <begin position="463"/>
        <end position="499"/>
    </location>
</feature>
<feature type="lipid moiety-binding region" description="S-palmitoyl cysteine; by host" evidence="2">
    <location>
        <position position="523"/>
    </location>
</feature>
<feature type="glycosylation site" description="N-linked (GlcNAc...) asparagine; by host" evidence="2">
    <location>
        <position position="85"/>
    </location>
</feature>
<feature type="glycosylation site" description="N-linked (GlcNAc...) asparagine; by host" evidence="2">
    <location>
        <position position="191"/>
    </location>
</feature>
<feature type="glycosylation site" description="N-linked (GlcNAc...) asparagine; by host" evidence="2">
    <location>
        <position position="366"/>
    </location>
</feature>
<feature type="glycosylation site" description="N-linked (GlcNAc...) asparagine; by host" evidence="2">
    <location>
        <position position="447"/>
    </location>
</feature>
<feature type="glycosylation site" description="N-linked (GlcNAc...) asparagine; by host" evidence="2">
    <location>
        <position position="471"/>
    </location>
</feature>
<feature type="disulfide bond" description="Interchain (between F2 and F1 chains)" evidence="1">
    <location>
        <begin position="76"/>
        <end position="199"/>
    </location>
</feature>
<feature type="disulfide bond" evidence="1">
    <location>
        <begin position="338"/>
        <end position="347"/>
    </location>
</feature>
<feature type="disulfide bond" evidence="1">
    <location>
        <begin position="362"/>
        <end position="370"/>
    </location>
</feature>
<feature type="disulfide bond" evidence="1">
    <location>
        <begin position="394"/>
        <end position="399"/>
    </location>
</feature>
<feature type="disulfide bond" evidence="1">
    <location>
        <begin position="401"/>
        <end position="424"/>
    </location>
</feature>
<proteinExistence type="inferred from homology"/>
<gene>
    <name type="primary">F</name>
</gene>
<organism>
    <name type="scientific">Newcastle disease virus (strain Chicken/United States/B1/48)</name>
    <name type="common">NDV</name>
    <dbReference type="NCBI Taxonomy" id="652953"/>
    <lineage>
        <taxon>Viruses</taxon>
        <taxon>Riboviria</taxon>
        <taxon>Orthornavirae</taxon>
        <taxon>Negarnaviricota</taxon>
        <taxon>Haploviricotina</taxon>
        <taxon>Monjiviricetes</taxon>
        <taxon>Mononegavirales</taxon>
        <taxon>Paramyxoviridae</taxon>
        <taxon>Avulavirinae</taxon>
        <taxon>Orthoavulavirus</taxon>
        <taxon>Orthoavulavirus javaense</taxon>
        <taxon>Avian paramyxovirus 1</taxon>
    </lineage>
</organism>